<evidence type="ECO:0000250" key="1">
    <source>
        <dbReference type="UniProtKB" id="P01065"/>
    </source>
</evidence>
<evidence type="ECO:0000255" key="2"/>
<evidence type="ECO:0000269" key="3">
    <source>
    </source>
</evidence>
<evidence type="ECO:0000269" key="4">
    <source>
    </source>
</evidence>
<evidence type="ECO:0000269" key="5">
    <source>
    </source>
</evidence>
<evidence type="ECO:0000305" key="6"/>
<evidence type="ECO:0000312" key="7">
    <source>
        <dbReference type="EMBL" id="CAD12253.1"/>
    </source>
</evidence>
<evidence type="ECO:0007829" key="8">
    <source>
        <dbReference type="PDB" id="2AIH"/>
    </source>
</evidence>
<keyword id="KW-0002">3D-structure</keyword>
<keyword id="KW-0903">Direct protein sequencing</keyword>
<keyword id="KW-1015">Disulfide bond</keyword>
<keyword id="KW-0646">Protease inhibitor</keyword>
<keyword id="KW-0722">Serine protease inhibitor</keyword>
<keyword id="KW-0732">Signal</keyword>
<reference evidence="6 7" key="1">
    <citation type="journal article" date="2005" name="Theor. Appl. Genet.">
        <title>Bowman-Birk inhibitors in Lens: identification and characterization of two paralogous gene classes in cultivated lentil and wild relatives.</title>
        <authorList>
            <person name="Sonnante G."/>
            <person name="De Paolis A."/>
            <person name="Pignone D."/>
        </authorList>
    </citation>
    <scope>NUCLEOTIDE SEQUENCE [GENOMIC DNA] OF 1-104</scope>
    <source>
        <strain evidence="4">cv. Macrosperma group</strain>
        <strain evidence="4">cv. Microsperma group</strain>
        <tissue evidence="4">Leaf</tissue>
    </source>
</reference>
<reference evidence="6" key="2">
    <citation type="journal article" date="2004" name="J. Agric. Food Chem.">
        <title>Complete amino acid sequence of the lentil trypsin-chymotrypsin inhibitor LCI-1.7 and a discussion of atypical binding sites of Bowman-Birk inhibitors.</title>
        <authorList>
            <person name="Weder J.K.P."/>
            <person name="Hinkers S.C."/>
        </authorList>
    </citation>
    <scope>PROTEIN SEQUENCE OF 43-110</scope>
    <source>
        <strain evidence="3">cv. Microsperma group</strain>
        <tissue evidence="3">Seed</tissue>
    </source>
</reference>
<reference key="3">
    <citation type="journal article" date="2006" name="FEBS J.">
        <title>Inhibitory properties and solution structure of a potent Bowman-Birk protease inhibitor from lentil (Lens culinaris, L) seeds.</title>
        <authorList>
            <person name="Ragg E.M."/>
            <person name="Galbusera V."/>
            <person name="Scarafoni A."/>
            <person name="Negri A."/>
            <person name="Tedeschi G."/>
            <person name="Consonni A."/>
            <person name="Sessa F."/>
            <person name="Duranti M."/>
        </authorList>
    </citation>
    <scope>PROTEIN SEQUENCE OF 43-110</scope>
    <scope>FUNCTION</scope>
    <scope>SUBUNIT</scope>
    <scope>STRUCTURE BY NMR OF 43-109</scope>
    <scope>DISULFIDE BONDS</scope>
    <scope>MASS SPECTROMETRY</scope>
    <source>
        <strain>cv. Macrosperma group</strain>
        <tissue>Seed</tissue>
    </source>
</reference>
<comment type="function">
    <text evidence="5">Inhibitor of trypsin and of chymotrypsin.</text>
</comment>
<comment type="subunit">
    <text evidence="5">Monomer.</text>
</comment>
<comment type="mass spectrometry" mass="7446.63" method="MALDI" evidence="5"/>
<comment type="similarity">
    <text evidence="2">Belongs to the Bowman-Birk serine protease inhibitor family.</text>
</comment>
<name>IBB_LENCU</name>
<dbReference type="EMBL" id="AJ420110">
    <property type="protein sequence ID" value="CAD12253.1"/>
    <property type="molecule type" value="Genomic_DNA"/>
</dbReference>
<dbReference type="EMBL" id="AJ420109">
    <property type="protein sequence ID" value="CAD12252.1"/>
    <property type="molecule type" value="Genomic_DNA"/>
</dbReference>
<dbReference type="PDB" id="2AIH">
    <property type="method" value="NMR"/>
    <property type="chains" value="A=43-109"/>
</dbReference>
<dbReference type="PDBsum" id="2AIH"/>
<dbReference type="BMRB" id="Q8W4Y8"/>
<dbReference type="SMR" id="Q8W4Y8"/>
<dbReference type="MEROPS" id="I12.003"/>
<dbReference type="EvolutionaryTrace" id="Q8W4Y8"/>
<dbReference type="GO" id="GO:0005576">
    <property type="term" value="C:extracellular region"/>
    <property type="evidence" value="ECO:0007669"/>
    <property type="project" value="InterPro"/>
</dbReference>
<dbReference type="GO" id="GO:0004867">
    <property type="term" value="F:serine-type endopeptidase inhibitor activity"/>
    <property type="evidence" value="ECO:0007669"/>
    <property type="project" value="UniProtKB-KW"/>
</dbReference>
<dbReference type="CDD" id="cd00023">
    <property type="entry name" value="BBI"/>
    <property type="match status" value="1"/>
</dbReference>
<dbReference type="FunFam" id="2.10.69.10:FF:000001">
    <property type="entry name" value="Bowman-Birk type proteinase inhibitor"/>
    <property type="match status" value="1"/>
</dbReference>
<dbReference type="Gene3D" id="2.10.69.10">
    <property type="entry name" value="Cysteine Protease (Bromelain) Inhibitor, subunit H"/>
    <property type="match status" value="1"/>
</dbReference>
<dbReference type="InterPro" id="IPR035995">
    <property type="entry name" value="Bowman-Birk_prot_inh"/>
</dbReference>
<dbReference type="InterPro" id="IPR000877">
    <property type="entry name" value="Prot_inh_BBI"/>
</dbReference>
<dbReference type="PANTHER" id="PTHR33479">
    <property type="entry name" value="BOWMAN-BIRK TYPE BRAN TRYPSIN INHIBITOR"/>
    <property type="match status" value="1"/>
</dbReference>
<dbReference type="PANTHER" id="PTHR33479:SF19">
    <property type="entry name" value="BOWMAN-BIRK TYPE PROTEINASE INHIBITOR C-II"/>
    <property type="match status" value="1"/>
</dbReference>
<dbReference type="Pfam" id="PF00228">
    <property type="entry name" value="Bowman-Birk_leg"/>
    <property type="match status" value="2"/>
</dbReference>
<dbReference type="SMART" id="SM00269">
    <property type="entry name" value="BowB"/>
    <property type="match status" value="1"/>
</dbReference>
<dbReference type="SUPFAM" id="SSF57247">
    <property type="entry name" value="Bowman-Birk inhibitor, BBI"/>
    <property type="match status" value="1"/>
</dbReference>
<dbReference type="PROSITE" id="PS00281">
    <property type="entry name" value="BOWMAN_BIRK"/>
    <property type="match status" value="1"/>
</dbReference>
<protein>
    <recommendedName>
        <fullName>Bowman-Birk type proteinase inhibitor</fullName>
    </recommendedName>
    <alternativeName>
        <fullName>LCTI</fullName>
    </alternativeName>
    <alternativeName>
        <fullName>Trypsin/chymotrypsin inhibitor</fullName>
    </alternativeName>
</protein>
<organism>
    <name type="scientific">Lens culinaris</name>
    <name type="common">Lentil</name>
    <name type="synonym">Cicer lens</name>
    <dbReference type="NCBI Taxonomy" id="3864"/>
    <lineage>
        <taxon>Eukaryota</taxon>
        <taxon>Viridiplantae</taxon>
        <taxon>Streptophyta</taxon>
        <taxon>Embryophyta</taxon>
        <taxon>Tracheophyta</taxon>
        <taxon>Spermatophyta</taxon>
        <taxon>Magnoliopsida</taxon>
        <taxon>eudicotyledons</taxon>
        <taxon>Gunneridae</taxon>
        <taxon>Pentapetalae</taxon>
        <taxon>rosids</taxon>
        <taxon>fabids</taxon>
        <taxon>Fabales</taxon>
        <taxon>Fabaceae</taxon>
        <taxon>Papilionoideae</taxon>
        <taxon>50 kb inversion clade</taxon>
        <taxon>NPAAA clade</taxon>
        <taxon>Hologalegina</taxon>
        <taxon>IRL clade</taxon>
        <taxon>Fabeae</taxon>
        <taxon>Lens</taxon>
    </lineage>
</organism>
<sequence length="110" mass="12266">MVLMNKKAIMKLALMLFLLGFTANVVDARFDSTSFITQVLSNGDDVKSACCDTCLCTRSQPPTCRCVDVRESCHSACDKCVCAYSNPPQCQCYDTHKFCYKACHNSEIEE</sequence>
<proteinExistence type="evidence at protein level"/>
<accession>Q8W4Y8</accession>
<accession>Q8W4Y9</accession>
<feature type="signal peptide" evidence="2">
    <location>
        <begin position="1"/>
        <end position="28"/>
    </location>
</feature>
<feature type="propeptide" id="PRO_0000003268" evidence="2 3 5">
    <location>
        <begin position="29"/>
        <end position="42"/>
    </location>
</feature>
<feature type="chain" id="PRO_0000003269" description="Bowman-Birk type proteinase inhibitor" evidence="3 5">
    <location>
        <begin position="43"/>
        <end position="110"/>
    </location>
</feature>
<feature type="site" description="Reactive bond for trypsin" evidence="1">
    <location>
        <begin position="58"/>
        <end position="59"/>
    </location>
</feature>
<feature type="site" description="Reactive bond for chymotrypsin" evidence="1">
    <location>
        <begin position="84"/>
        <end position="85"/>
    </location>
</feature>
<feature type="disulfide bond" evidence="5">
    <location>
        <begin position="50"/>
        <end position="103"/>
    </location>
</feature>
<feature type="disulfide bond" evidence="5">
    <location>
        <begin position="51"/>
        <end position="66"/>
    </location>
</feature>
<feature type="disulfide bond" evidence="5">
    <location>
        <begin position="54"/>
        <end position="99"/>
    </location>
</feature>
<feature type="disulfide bond" evidence="5">
    <location>
        <begin position="56"/>
        <end position="64"/>
    </location>
</feature>
<feature type="disulfide bond" evidence="5">
    <location>
        <begin position="73"/>
        <end position="80"/>
    </location>
</feature>
<feature type="disulfide bond" evidence="5">
    <location>
        <begin position="77"/>
        <end position="92"/>
    </location>
</feature>
<feature type="disulfide bond" evidence="5">
    <location>
        <begin position="82"/>
        <end position="90"/>
    </location>
</feature>
<feature type="sequence conflict" description="In Ref. 1; CAD12252." evidence="6" ref="1">
    <original>D</original>
    <variation>N</variation>
    <location>
        <position position="27"/>
    </location>
</feature>
<feature type="sequence conflict" description="In Ref. 1; CAD12253/CAD12252." evidence="6" ref="1">
    <original>K</original>
    <variation>N</variation>
    <location>
        <position position="97"/>
    </location>
</feature>
<feature type="sequence conflict" description="In Ref. 1; CAD12253." evidence="6" ref="1">
    <original>A</original>
    <variation>T</variation>
    <location>
        <position position="102"/>
    </location>
</feature>
<feature type="sequence conflict" description="In Ref. 3; AA sequence." evidence="6" ref="3">
    <location>
        <position position="110"/>
    </location>
</feature>
<feature type="strand" evidence="8">
    <location>
        <begin position="54"/>
        <end position="56"/>
    </location>
</feature>
<feature type="strand" evidence="8">
    <location>
        <begin position="58"/>
        <end position="61"/>
    </location>
</feature>
<feature type="strand" evidence="8">
    <location>
        <begin position="64"/>
        <end position="66"/>
    </location>
</feature>
<feature type="strand" evidence="8">
    <location>
        <begin position="80"/>
        <end position="83"/>
    </location>
</feature>
<feature type="strand" evidence="8">
    <location>
        <begin position="89"/>
        <end position="92"/>
    </location>
</feature>